<sequence>MSSGKIAQVVGPVVDVMFASGDKLPEINNALIVYKDSDKKQKIVLEVALELGDGMVRTIAMESTDGLTRGLEVLDTGRAISVPVGKETLGRVFNVLGETIDLEEPFAEDVDRQPIHKKAPSFDELSTSSEILETGIKVIDLLAPYLKGGKVGLFGGAGVGKTVLIQELIHNIAQEHGGISVFTGVGERTREGNDLYWEMKESGVIEKTAMVFGQMNEPPGARMRVALTGLTIAEYFRDVEGQDVLLFIDNIFRFTQAGSEVSALLGRMPSAVGYQPTLATEMGQLQERITSTQKGSVTSIQAIYVPADDYTDPAPATAFAHLDSTTNLERKLTQMGIYPAVDPLASSSRALSPEIVGEEHYAVATEVQRVLQRYRELQDIIAILGMDELSDEEKTLVGRARRIQFFLSQNFNVAEQFTGLPGSYVPVADTVRGFKEILEGKYDELPEDAFRSVGPIEDVIKKAEKMGF</sequence>
<name>ATPB_STRP1</name>
<keyword id="KW-0066">ATP synthesis</keyword>
<keyword id="KW-0067">ATP-binding</keyword>
<keyword id="KW-1003">Cell membrane</keyword>
<keyword id="KW-0139">CF(1)</keyword>
<keyword id="KW-0375">Hydrogen ion transport</keyword>
<keyword id="KW-0406">Ion transport</keyword>
<keyword id="KW-0472">Membrane</keyword>
<keyword id="KW-0547">Nucleotide-binding</keyword>
<keyword id="KW-1185">Reference proteome</keyword>
<keyword id="KW-1278">Translocase</keyword>
<keyword id="KW-0813">Transport</keyword>
<evidence type="ECO:0000255" key="1">
    <source>
        <dbReference type="HAMAP-Rule" id="MF_01347"/>
    </source>
</evidence>
<organism>
    <name type="scientific">Streptococcus pyogenes serotype M1</name>
    <dbReference type="NCBI Taxonomy" id="301447"/>
    <lineage>
        <taxon>Bacteria</taxon>
        <taxon>Bacillati</taxon>
        <taxon>Bacillota</taxon>
        <taxon>Bacilli</taxon>
        <taxon>Lactobacillales</taxon>
        <taxon>Streptococcaceae</taxon>
        <taxon>Streptococcus</taxon>
    </lineage>
</organism>
<dbReference type="EC" id="7.1.2.2" evidence="1"/>
<dbReference type="EMBL" id="AE004092">
    <property type="protein sequence ID" value="AAK33703.1"/>
    <property type="molecule type" value="Genomic_DNA"/>
</dbReference>
<dbReference type="EMBL" id="CP000017">
    <property type="protein sequence ID" value="AAZ51199.1"/>
    <property type="molecule type" value="Genomic_DNA"/>
</dbReference>
<dbReference type="RefSeq" id="NP_268982.1">
    <property type="nucleotide sequence ID" value="NC_002737.2"/>
</dbReference>
<dbReference type="SMR" id="Q9A0I7"/>
<dbReference type="PaxDb" id="1314-HKU360_00591"/>
<dbReference type="KEGG" id="spy:SPy_0760"/>
<dbReference type="KEGG" id="spz:M5005_Spy0581"/>
<dbReference type="PATRIC" id="fig|160490.10.peg.648"/>
<dbReference type="HOGENOM" id="CLU_022398_0_2_9"/>
<dbReference type="OMA" id="SMEEGGW"/>
<dbReference type="Proteomes" id="UP000000750">
    <property type="component" value="Chromosome"/>
</dbReference>
<dbReference type="GO" id="GO:0005886">
    <property type="term" value="C:plasma membrane"/>
    <property type="evidence" value="ECO:0007669"/>
    <property type="project" value="UniProtKB-SubCell"/>
</dbReference>
<dbReference type="GO" id="GO:0045259">
    <property type="term" value="C:proton-transporting ATP synthase complex"/>
    <property type="evidence" value="ECO:0007669"/>
    <property type="project" value="UniProtKB-KW"/>
</dbReference>
<dbReference type="GO" id="GO:0005524">
    <property type="term" value="F:ATP binding"/>
    <property type="evidence" value="ECO:0007669"/>
    <property type="project" value="UniProtKB-UniRule"/>
</dbReference>
<dbReference type="GO" id="GO:0016887">
    <property type="term" value="F:ATP hydrolysis activity"/>
    <property type="evidence" value="ECO:0007669"/>
    <property type="project" value="InterPro"/>
</dbReference>
<dbReference type="GO" id="GO:0046933">
    <property type="term" value="F:proton-transporting ATP synthase activity, rotational mechanism"/>
    <property type="evidence" value="ECO:0007669"/>
    <property type="project" value="UniProtKB-UniRule"/>
</dbReference>
<dbReference type="CDD" id="cd18110">
    <property type="entry name" value="ATP-synt_F1_beta_C"/>
    <property type="match status" value="1"/>
</dbReference>
<dbReference type="CDD" id="cd18115">
    <property type="entry name" value="ATP-synt_F1_beta_N"/>
    <property type="match status" value="1"/>
</dbReference>
<dbReference type="CDD" id="cd01133">
    <property type="entry name" value="F1-ATPase_beta_CD"/>
    <property type="match status" value="1"/>
</dbReference>
<dbReference type="FunFam" id="1.10.1140.10:FF:000001">
    <property type="entry name" value="ATP synthase subunit beta"/>
    <property type="match status" value="1"/>
</dbReference>
<dbReference type="FunFam" id="2.40.10.170:FF:000005">
    <property type="entry name" value="ATP synthase subunit beta"/>
    <property type="match status" value="1"/>
</dbReference>
<dbReference type="FunFam" id="3.40.50.300:FF:000004">
    <property type="entry name" value="ATP synthase subunit beta"/>
    <property type="match status" value="1"/>
</dbReference>
<dbReference type="Gene3D" id="2.40.10.170">
    <property type="match status" value="1"/>
</dbReference>
<dbReference type="Gene3D" id="1.10.1140.10">
    <property type="entry name" value="Bovine Mitochondrial F1-atpase, Atp Synthase Beta Chain, Chain D, domain 3"/>
    <property type="match status" value="1"/>
</dbReference>
<dbReference type="Gene3D" id="3.40.50.300">
    <property type="entry name" value="P-loop containing nucleotide triphosphate hydrolases"/>
    <property type="match status" value="1"/>
</dbReference>
<dbReference type="HAMAP" id="MF_01347">
    <property type="entry name" value="ATP_synth_beta_bact"/>
    <property type="match status" value="1"/>
</dbReference>
<dbReference type="InterPro" id="IPR003593">
    <property type="entry name" value="AAA+_ATPase"/>
</dbReference>
<dbReference type="InterPro" id="IPR055190">
    <property type="entry name" value="ATP-synt_VA_C"/>
</dbReference>
<dbReference type="InterPro" id="IPR005722">
    <property type="entry name" value="ATP_synth_F1_bsu"/>
</dbReference>
<dbReference type="InterPro" id="IPR020003">
    <property type="entry name" value="ATPase_a/bsu_AS"/>
</dbReference>
<dbReference type="InterPro" id="IPR050053">
    <property type="entry name" value="ATPase_alpha/beta_chains"/>
</dbReference>
<dbReference type="InterPro" id="IPR004100">
    <property type="entry name" value="ATPase_F1/V1/A1_a/bsu_N"/>
</dbReference>
<dbReference type="InterPro" id="IPR036121">
    <property type="entry name" value="ATPase_F1/V1/A1_a/bsu_N_sf"/>
</dbReference>
<dbReference type="InterPro" id="IPR000194">
    <property type="entry name" value="ATPase_F1/V1/A1_a/bsu_nucl-bd"/>
</dbReference>
<dbReference type="InterPro" id="IPR024034">
    <property type="entry name" value="ATPase_F1/V1_b/a_C"/>
</dbReference>
<dbReference type="InterPro" id="IPR027417">
    <property type="entry name" value="P-loop_NTPase"/>
</dbReference>
<dbReference type="NCBIfam" id="TIGR01039">
    <property type="entry name" value="atpD"/>
    <property type="match status" value="1"/>
</dbReference>
<dbReference type="PANTHER" id="PTHR15184">
    <property type="entry name" value="ATP SYNTHASE"/>
    <property type="match status" value="1"/>
</dbReference>
<dbReference type="PANTHER" id="PTHR15184:SF71">
    <property type="entry name" value="ATP SYNTHASE SUBUNIT BETA, MITOCHONDRIAL"/>
    <property type="match status" value="1"/>
</dbReference>
<dbReference type="Pfam" id="PF00006">
    <property type="entry name" value="ATP-synt_ab"/>
    <property type="match status" value="1"/>
</dbReference>
<dbReference type="Pfam" id="PF02874">
    <property type="entry name" value="ATP-synt_ab_N"/>
    <property type="match status" value="1"/>
</dbReference>
<dbReference type="Pfam" id="PF22919">
    <property type="entry name" value="ATP-synt_VA_C"/>
    <property type="match status" value="1"/>
</dbReference>
<dbReference type="SMART" id="SM00382">
    <property type="entry name" value="AAA"/>
    <property type="match status" value="1"/>
</dbReference>
<dbReference type="SUPFAM" id="SSF47917">
    <property type="entry name" value="C-terminal domain of alpha and beta subunits of F1 ATP synthase"/>
    <property type="match status" value="1"/>
</dbReference>
<dbReference type="SUPFAM" id="SSF50615">
    <property type="entry name" value="N-terminal domain of alpha and beta subunits of F1 ATP synthase"/>
    <property type="match status" value="1"/>
</dbReference>
<dbReference type="SUPFAM" id="SSF52540">
    <property type="entry name" value="P-loop containing nucleoside triphosphate hydrolases"/>
    <property type="match status" value="1"/>
</dbReference>
<dbReference type="PROSITE" id="PS00152">
    <property type="entry name" value="ATPASE_ALPHA_BETA"/>
    <property type="match status" value="1"/>
</dbReference>
<comment type="function">
    <text evidence="1">Produces ATP from ADP in the presence of a proton gradient across the membrane. The catalytic sites are hosted primarily by the beta subunits.</text>
</comment>
<comment type="catalytic activity">
    <reaction evidence="1">
        <text>ATP + H2O + 4 H(+)(in) = ADP + phosphate + 5 H(+)(out)</text>
        <dbReference type="Rhea" id="RHEA:57720"/>
        <dbReference type="ChEBI" id="CHEBI:15377"/>
        <dbReference type="ChEBI" id="CHEBI:15378"/>
        <dbReference type="ChEBI" id="CHEBI:30616"/>
        <dbReference type="ChEBI" id="CHEBI:43474"/>
        <dbReference type="ChEBI" id="CHEBI:456216"/>
        <dbReference type="EC" id="7.1.2.2"/>
    </reaction>
</comment>
<comment type="subunit">
    <text evidence="1">F-type ATPases have 2 components, CF(1) - the catalytic core - and CF(0) - the membrane proton channel. CF(1) has five subunits: alpha(3), beta(3), gamma(1), delta(1), epsilon(1). CF(0) has three main subunits: a(1), b(2) and c(9-12). The alpha and beta chains form an alternating ring which encloses part of the gamma chain. CF(1) is attached to CF(0) by a central stalk formed by the gamma and epsilon chains, while a peripheral stalk is formed by the delta and b chains.</text>
</comment>
<comment type="subcellular location">
    <subcellularLocation>
        <location evidence="1">Cell membrane</location>
        <topology evidence="1">Peripheral membrane protein</topology>
    </subcellularLocation>
</comment>
<comment type="similarity">
    <text evidence="1">Belongs to the ATPase alpha/beta chains family.</text>
</comment>
<proteinExistence type="inferred from homology"/>
<accession>Q9A0I7</accession>
<accession>Q48ZL9</accession>
<reference key="1">
    <citation type="journal article" date="2001" name="Proc. Natl. Acad. Sci. U.S.A.">
        <title>Complete genome sequence of an M1 strain of Streptococcus pyogenes.</title>
        <authorList>
            <person name="Ferretti J.J."/>
            <person name="McShan W.M."/>
            <person name="Ajdic D.J."/>
            <person name="Savic D.J."/>
            <person name="Savic G."/>
            <person name="Lyon K."/>
            <person name="Primeaux C."/>
            <person name="Sezate S."/>
            <person name="Suvorov A.N."/>
            <person name="Kenton S."/>
            <person name="Lai H.S."/>
            <person name="Lin S.P."/>
            <person name="Qian Y."/>
            <person name="Jia H.G."/>
            <person name="Najar F.Z."/>
            <person name="Ren Q."/>
            <person name="Zhu H."/>
            <person name="Song L."/>
            <person name="White J."/>
            <person name="Yuan X."/>
            <person name="Clifton S.W."/>
            <person name="Roe B.A."/>
            <person name="McLaughlin R.E."/>
        </authorList>
    </citation>
    <scope>NUCLEOTIDE SEQUENCE [LARGE SCALE GENOMIC DNA]</scope>
    <source>
        <strain>ATCC 700294 / SF370 / Serotype M1</strain>
    </source>
</reference>
<reference key="2">
    <citation type="journal article" date="2005" name="J. Infect. Dis.">
        <title>Evolutionary origin and emergence of a highly successful clone of serotype M1 group A Streptococcus involved multiple horizontal gene transfer events.</title>
        <authorList>
            <person name="Sumby P."/>
            <person name="Porcella S.F."/>
            <person name="Madrigal A.G."/>
            <person name="Barbian K.D."/>
            <person name="Virtaneva K."/>
            <person name="Ricklefs S.M."/>
            <person name="Sturdevant D.E."/>
            <person name="Graham M.R."/>
            <person name="Vuopio-Varkila J."/>
            <person name="Hoe N.P."/>
            <person name="Musser J.M."/>
        </authorList>
    </citation>
    <scope>NUCLEOTIDE SEQUENCE [LARGE SCALE GENOMIC DNA]</scope>
    <source>
        <strain>ATCC BAA-947 / MGAS5005 / Serotype M1</strain>
    </source>
</reference>
<gene>
    <name evidence="1" type="primary">atpD</name>
    <name type="ordered locus">SPy_0760</name>
    <name type="ordered locus">M5005_Spy0581</name>
</gene>
<protein>
    <recommendedName>
        <fullName evidence="1">ATP synthase subunit beta</fullName>
        <ecNumber evidence="1">7.1.2.2</ecNumber>
    </recommendedName>
    <alternativeName>
        <fullName evidence="1">ATP synthase F1 sector subunit beta</fullName>
    </alternativeName>
    <alternativeName>
        <fullName evidence="1">F-ATPase subunit beta</fullName>
    </alternativeName>
</protein>
<feature type="chain" id="PRO_0000254391" description="ATP synthase subunit beta">
    <location>
        <begin position="1"/>
        <end position="468"/>
    </location>
</feature>
<feature type="binding site" evidence="1">
    <location>
        <begin position="155"/>
        <end position="162"/>
    </location>
    <ligand>
        <name>ATP</name>
        <dbReference type="ChEBI" id="CHEBI:30616"/>
    </ligand>
</feature>